<sequence>MAKITRKRRVKKNIESGIVHIQSTFNNTIVMITDVHGNALAWSSAGALGFKGSKKSTPFAAQMASEAAAKAAQEQGLKTVSVTVKGPGSGRESAIRALAAAGLNVTSISDVTPVPHNGARPPKRRRV</sequence>
<feature type="chain" id="PRO_0000294780" description="Small ribosomal subunit protein uS11">
    <location>
        <begin position="1"/>
        <end position="127"/>
    </location>
</feature>
<proteinExistence type="inferred from homology"/>
<keyword id="KW-0687">Ribonucleoprotein</keyword>
<keyword id="KW-0689">Ribosomal protein</keyword>
<keyword id="KW-0694">RNA-binding</keyword>
<keyword id="KW-0699">rRNA-binding</keyword>
<gene>
    <name evidence="1" type="primary">rpsK</name>
    <name type="ordered locus">LACR_2376</name>
</gene>
<dbReference type="EMBL" id="CP000425">
    <property type="protein sequence ID" value="ABJ73822.1"/>
    <property type="molecule type" value="Genomic_DNA"/>
</dbReference>
<dbReference type="RefSeq" id="WP_010906297.1">
    <property type="nucleotide sequence ID" value="NC_008527.1"/>
</dbReference>
<dbReference type="SMR" id="Q02W50"/>
<dbReference type="GeneID" id="89634421"/>
<dbReference type="KEGG" id="llc:LACR_2376"/>
<dbReference type="HOGENOM" id="CLU_072439_5_0_9"/>
<dbReference type="Proteomes" id="UP000000240">
    <property type="component" value="Chromosome"/>
</dbReference>
<dbReference type="GO" id="GO:1990904">
    <property type="term" value="C:ribonucleoprotein complex"/>
    <property type="evidence" value="ECO:0007669"/>
    <property type="project" value="UniProtKB-KW"/>
</dbReference>
<dbReference type="GO" id="GO:0005840">
    <property type="term" value="C:ribosome"/>
    <property type="evidence" value="ECO:0007669"/>
    <property type="project" value="UniProtKB-KW"/>
</dbReference>
<dbReference type="GO" id="GO:0019843">
    <property type="term" value="F:rRNA binding"/>
    <property type="evidence" value="ECO:0007669"/>
    <property type="project" value="UniProtKB-UniRule"/>
</dbReference>
<dbReference type="GO" id="GO:0003735">
    <property type="term" value="F:structural constituent of ribosome"/>
    <property type="evidence" value="ECO:0007669"/>
    <property type="project" value="InterPro"/>
</dbReference>
<dbReference type="GO" id="GO:0006412">
    <property type="term" value="P:translation"/>
    <property type="evidence" value="ECO:0007669"/>
    <property type="project" value="UniProtKB-UniRule"/>
</dbReference>
<dbReference type="FunFam" id="3.30.420.80:FF:000001">
    <property type="entry name" value="30S ribosomal protein S11"/>
    <property type="match status" value="1"/>
</dbReference>
<dbReference type="Gene3D" id="3.30.420.80">
    <property type="entry name" value="Ribosomal protein S11"/>
    <property type="match status" value="1"/>
</dbReference>
<dbReference type="HAMAP" id="MF_01310">
    <property type="entry name" value="Ribosomal_uS11"/>
    <property type="match status" value="1"/>
</dbReference>
<dbReference type="InterPro" id="IPR001971">
    <property type="entry name" value="Ribosomal_uS11"/>
</dbReference>
<dbReference type="InterPro" id="IPR019981">
    <property type="entry name" value="Ribosomal_uS11_bac-type"/>
</dbReference>
<dbReference type="InterPro" id="IPR018102">
    <property type="entry name" value="Ribosomal_uS11_CS"/>
</dbReference>
<dbReference type="InterPro" id="IPR036967">
    <property type="entry name" value="Ribosomal_uS11_sf"/>
</dbReference>
<dbReference type="NCBIfam" id="NF003698">
    <property type="entry name" value="PRK05309.1"/>
    <property type="match status" value="1"/>
</dbReference>
<dbReference type="NCBIfam" id="TIGR03632">
    <property type="entry name" value="uS11_bact"/>
    <property type="match status" value="1"/>
</dbReference>
<dbReference type="PANTHER" id="PTHR11759">
    <property type="entry name" value="40S RIBOSOMAL PROTEIN S14/30S RIBOSOMAL PROTEIN S11"/>
    <property type="match status" value="1"/>
</dbReference>
<dbReference type="Pfam" id="PF00411">
    <property type="entry name" value="Ribosomal_S11"/>
    <property type="match status" value="1"/>
</dbReference>
<dbReference type="PIRSF" id="PIRSF002131">
    <property type="entry name" value="Ribosomal_S11"/>
    <property type="match status" value="1"/>
</dbReference>
<dbReference type="SUPFAM" id="SSF53137">
    <property type="entry name" value="Translational machinery components"/>
    <property type="match status" value="1"/>
</dbReference>
<dbReference type="PROSITE" id="PS00054">
    <property type="entry name" value="RIBOSOMAL_S11"/>
    <property type="match status" value="1"/>
</dbReference>
<evidence type="ECO:0000255" key="1">
    <source>
        <dbReference type="HAMAP-Rule" id="MF_01310"/>
    </source>
</evidence>
<evidence type="ECO:0000305" key="2"/>
<name>RS11_LACLS</name>
<comment type="function">
    <text evidence="1">Located on the platform of the 30S subunit, it bridges several disparate RNA helices of the 16S rRNA. Forms part of the Shine-Dalgarno cleft in the 70S ribosome.</text>
</comment>
<comment type="subunit">
    <text evidence="1">Part of the 30S ribosomal subunit. Interacts with proteins S7 and S18. Binds to IF-3.</text>
</comment>
<comment type="similarity">
    <text evidence="1">Belongs to the universal ribosomal protein uS11 family.</text>
</comment>
<protein>
    <recommendedName>
        <fullName evidence="1">Small ribosomal subunit protein uS11</fullName>
    </recommendedName>
    <alternativeName>
        <fullName evidence="2">30S ribosomal protein S11</fullName>
    </alternativeName>
</protein>
<organism>
    <name type="scientific">Lactococcus lactis subsp. cremoris (strain SK11)</name>
    <dbReference type="NCBI Taxonomy" id="272622"/>
    <lineage>
        <taxon>Bacteria</taxon>
        <taxon>Bacillati</taxon>
        <taxon>Bacillota</taxon>
        <taxon>Bacilli</taxon>
        <taxon>Lactobacillales</taxon>
        <taxon>Streptococcaceae</taxon>
        <taxon>Lactococcus</taxon>
        <taxon>Lactococcus cremoris subsp. cremoris</taxon>
    </lineage>
</organism>
<reference key="1">
    <citation type="journal article" date="2006" name="Proc. Natl. Acad. Sci. U.S.A.">
        <title>Comparative genomics of the lactic acid bacteria.</title>
        <authorList>
            <person name="Makarova K.S."/>
            <person name="Slesarev A."/>
            <person name="Wolf Y.I."/>
            <person name="Sorokin A."/>
            <person name="Mirkin B."/>
            <person name="Koonin E.V."/>
            <person name="Pavlov A."/>
            <person name="Pavlova N."/>
            <person name="Karamychev V."/>
            <person name="Polouchine N."/>
            <person name="Shakhova V."/>
            <person name="Grigoriev I."/>
            <person name="Lou Y."/>
            <person name="Rohksar D."/>
            <person name="Lucas S."/>
            <person name="Huang K."/>
            <person name="Goodstein D.M."/>
            <person name="Hawkins T."/>
            <person name="Plengvidhya V."/>
            <person name="Welker D."/>
            <person name="Hughes J."/>
            <person name="Goh Y."/>
            <person name="Benson A."/>
            <person name="Baldwin K."/>
            <person name="Lee J.-H."/>
            <person name="Diaz-Muniz I."/>
            <person name="Dosti B."/>
            <person name="Smeianov V."/>
            <person name="Wechter W."/>
            <person name="Barabote R."/>
            <person name="Lorca G."/>
            <person name="Altermann E."/>
            <person name="Barrangou R."/>
            <person name="Ganesan B."/>
            <person name="Xie Y."/>
            <person name="Rawsthorne H."/>
            <person name="Tamir D."/>
            <person name="Parker C."/>
            <person name="Breidt F."/>
            <person name="Broadbent J.R."/>
            <person name="Hutkins R."/>
            <person name="O'Sullivan D."/>
            <person name="Steele J."/>
            <person name="Unlu G."/>
            <person name="Saier M.H. Jr."/>
            <person name="Klaenhammer T."/>
            <person name="Richardson P."/>
            <person name="Kozyavkin S."/>
            <person name="Weimer B.C."/>
            <person name="Mills D.A."/>
        </authorList>
    </citation>
    <scope>NUCLEOTIDE SEQUENCE [LARGE SCALE GENOMIC DNA]</scope>
    <source>
        <strain>SK11</strain>
    </source>
</reference>
<accession>Q02W50</accession>